<comment type="function">
    <text evidence="1">Activates transcription of virulence factors alpha- and beta hemolysin genes (hla and hlb). Also, activates RNAIII expression, a central regulator transcribed from the agr locus (By similarity).</text>
</comment>
<comment type="subcellular location">
    <subcellularLocation>
        <location evidence="1">Cytoplasm</location>
    </subcellularLocation>
</comment>
<comment type="induction">
    <text evidence="1">Transcriptionally activated by CvfA.</text>
</comment>
<comment type="similarity">
    <text evidence="3">Belongs to the SarZ family.</text>
</comment>
<evidence type="ECO:0000250" key="1"/>
<evidence type="ECO:0000255" key="2">
    <source>
        <dbReference type="PROSITE-ProRule" id="PRU00345"/>
    </source>
</evidence>
<evidence type="ECO:0000305" key="3"/>
<organism>
    <name type="scientific">Staphylococcus aureus (strain MSSA476)</name>
    <dbReference type="NCBI Taxonomy" id="282459"/>
    <lineage>
        <taxon>Bacteria</taxon>
        <taxon>Bacillati</taxon>
        <taxon>Bacillota</taxon>
        <taxon>Bacilli</taxon>
        <taxon>Bacillales</taxon>
        <taxon>Staphylococcaceae</taxon>
        <taxon>Staphylococcus</taxon>
    </lineage>
</organism>
<protein>
    <recommendedName>
        <fullName>HTH-type transcriptional regulator SarZ</fullName>
    </recommendedName>
    <alternativeName>
        <fullName>Staphylococcal accessory regulator Z</fullName>
    </alternativeName>
</protein>
<keyword id="KW-0010">Activator</keyword>
<keyword id="KW-0963">Cytoplasm</keyword>
<keyword id="KW-0238">DNA-binding</keyword>
<keyword id="KW-0804">Transcription</keyword>
<keyword id="KW-0805">Transcription regulation</keyword>
<keyword id="KW-0843">Virulence</keyword>
<feature type="chain" id="PRO_0000284457" description="HTH-type transcriptional regulator SarZ">
    <location>
        <begin position="1"/>
        <end position="148"/>
    </location>
</feature>
<feature type="domain" description="HTH marR-type" evidence="2">
    <location>
        <begin position="9"/>
        <end position="139"/>
    </location>
</feature>
<feature type="DNA-binding region" description="H-T-H motif" evidence="2">
    <location>
        <begin position="55"/>
        <end position="78"/>
    </location>
</feature>
<proteinExistence type="inferred from homology"/>
<dbReference type="EMBL" id="BX571857">
    <property type="protein sequence ID" value="CAG44089.1"/>
    <property type="molecule type" value="Genomic_DNA"/>
</dbReference>
<dbReference type="RefSeq" id="WP_000289213.1">
    <property type="nucleotide sequence ID" value="NC_002953.3"/>
</dbReference>
<dbReference type="SMR" id="Q6G6T5"/>
<dbReference type="KEGG" id="sas:SAS2276"/>
<dbReference type="HOGENOM" id="CLU_083287_3_2_9"/>
<dbReference type="GO" id="GO:0005737">
    <property type="term" value="C:cytoplasm"/>
    <property type="evidence" value="ECO:0007669"/>
    <property type="project" value="UniProtKB-SubCell"/>
</dbReference>
<dbReference type="GO" id="GO:0003677">
    <property type="term" value="F:DNA binding"/>
    <property type="evidence" value="ECO:0007669"/>
    <property type="project" value="UniProtKB-KW"/>
</dbReference>
<dbReference type="GO" id="GO:0003700">
    <property type="term" value="F:DNA-binding transcription factor activity"/>
    <property type="evidence" value="ECO:0007669"/>
    <property type="project" value="InterPro"/>
</dbReference>
<dbReference type="FunFam" id="1.10.10.10:FF:000163">
    <property type="entry name" value="MarR family transcriptional regulator"/>
    <property type="match status" value="1"/>
</dbReference>
<dbReference type="Gene3D" id="1.10.10.10">
    <property type="entry name" value="Winged helix-like DNA-binding domain superfamily/Winged helix DNA-binding domain"/>
    <property type="match status" value="1"/>
</dbReference>
<dbReference type="InterPro" id="IPR000835">
    <property type="entry name" value="HTH_MarR-typ"/>
</dbReference>
<dbReference type="InterPro" id="IPR055166">
    <property type="entry name" value="Transc_reg_Sar_Rot_HTH"/>
</dbReference>
<dbReference type="InterPro" id="IPR036388">
    <property type="entry name" value="WH-like_DNA-bd_sf"/>
</dbReference>
<dbReference type="InterPro" id="IPR036390">
    <property type="entry name" value="WH_DNA-bd_sf"/>
</dbReference>
<dbReference type="PANTHER" id="PTHR42756">
    <property type="entry name" value="TRANSCRIPTIONAL REGULATOR, MARR"/>
    <property type="match status" value="1"/>
</dbReference>
<dbReference type="PANTHER" id="PTHR42756:SF1">
    <property type="entry name" value="TRANSCRIPTIONAL REPRESSOR OF EMRAB OPERON"/>
    <property type="match status" value="1"/>
</dbReference>
<dbReference type="Pfam" id="PF22381">
    <property type="entry name" value="Staph_reg_Sar_Rot"/>
    <property type="match status" value="1"/>
</dbReference>
<dbReference type="PRINTS" id="PR00598">
    <property type="entry name" value="HTHMARR"/>
</dbReference>
<dbReference type="SMART" id="SM00347">
    <property type="entry name" value="HTH_MARR"/>
    <property type="match status" value="1"/>
</dbReference>
<dbReference type="SUPFAM" id="SSF46785">
    <property type="entry name" value="Winged helix' DNA-binding domain"/>
    <property type="match status" value="1"/>
</dbReference>
<dbReference type="PROSITE" id="PS50995">
    <property type="entry name" value="HTH_MARR_2"/>
    <property type="match status" value="1"/>
</dbReference>
<name>SARZ_STAAS</name>
<accession>Q6G6T5</accession>
<reference key="1">
    <citation type="journal article" date="2004" name="Proc. Natl. Acad. Sci. U.S.A.">
        <title>Complete genomes of two clinical Staphylococcus aureus strains: evidence for the rapid evolution of virulence and drug resistance.</title>
        <authorList>
            <person name="Holden M.T.G."/>
            <person name="Feil E.J."/>
            <person name="Lindsay J.A."/>
            <person name="Peacock S.J."/>
            <person name="Day N.P.J."/>
            <person name="Enright M.C."/>
            <person name="Foster T.J."/>
            <person name="Moore C.E."/>
            <person name="Hurst L."/>
            <person name="Atkin R."/>
            <person name="Barron A."/>
            <person name="Bason N."/>
            <person name="Bentley S.D."/>
            <person name="Chillingworth C."/>
            <person name="Chillingworth T."/>
            <person name="Churcher C."/>
            <person name="Clark L."/>
            <person name="Corton C."/>
            <person name="Cronin A."/>
            <person name="Doggett J."/>
            <person name="Dowd L."/>
            <person name="Feltwell T."/>
            <person name="Hance Z."/>
            <person name="Harris B."/>
            <person name="Hauser H."/>
            <person name="Holroyd S."/>
            <person name="Jagels K."/>
            <person name="James K.D."/>
            <person name="Lennard N."/>
            <person name="Line A."/>
            <person name="Mayes R."/>
            <person name="Moule S."/>
            <person name="Mungall K."/>
            <person name="Ormond D."/>
            <person name="Quail M.A."/>
            <person name="Rabbinowitsch E."/>
            <person name="Rutherford K.M."/>
            <person name="Sanders M."/>
            <person name="Sharp S."/>
            <person name="Simmonds M."/>
            <person name="Stevens K."/>
            <person name="Whitehead S."/>
            <person name="Barrell B.G."/>
            <person name="Spratt B.G."/>
            <person name="Parkhill J."/>
        </authorList>
    </citation>
    <scope>NUCLEOTIDE SEQUENCE [LARGE SCALE GENOMIC DNA]</scope>
    <source>
        <strain>MSSA476</strain>
    </source>
</reference>
<gene>
    <name type="primary">sarZ</name>
    <name type="ordered locus">SAS2276</name>
</gene>
<sequence length="148" mass="17435">MYVENSYLSKQLCFLFYVSSKEIIKKYTNYLKEYDLTYTGYIVLMAIENDEKLNIKKLGERVFLDSGTLTPLLKKLEKKDYVVRTREEKDERNLQISLTEQGKAIKSPLAEISVKVFNEFNISEREASDIINNLRNFVSKNFDYSDKK</sequence>